<keyword id="KW-0067">ATP-binding</keyword>
<keyword id="KW-0436">Ligase</keyword>
<keyword id="KW-0547">Nucleotide-binding</keyword>
<keyword id="KW-0648">Protein biosynthesis</keyword>
<feature type="chain" id="PRO_1000076154" description="Aspartyl/glutamyl-tRNA(Asn/Gln) amidotransferase subunit B">
    <location>
        <begin position="1"/>
        <end position="479"/>
    </location>
</feature>
<organism>
    <name type="scientific">Clostridium beijerinckii (strain ATCC 51743 / NCIMB 8052)</name>
    <name type="common">Clostridium acetobutylicum</name>
    <dbReference type="NCBI Taxonomy" id="290402"/>
    <lineage>
        <taxon>Bacteria</taxon>
        <taxon>Bacillati</taxon>
        <taxon>Bacillota</taxon>
        <taxon>Clostridia</taxon>
        <taxon>Eubacteriales</taxon>
        <taxon>Clostridiaceae</taxon>
        <taxon>Clostridium</taxon>
    </lineage>
</organism>
<evidence type="ECO:0000255" key="1">
    <source>
        <dbReference type="HAMAP-Rule" id="MF_00121"/>
    </source>
</evidence>
<name>GATB_CLOB8</name>
<protein>
    <recommendedName>
        <fullName evidence="1">Aspartyl/glutamyl-tRNA(Asn/Gln) amidotransferase subunit B</fullName>
        <shortName evidence="1">Asp/Glu-ADT subunit B</shortName>
        <ecNumber evidence="1">6.3.5.-</ecNumber>
    </recommendedName>
</protein>
<comment type="function">
    <text evidence="1">Allows the formation of correctly charged Asn-tRNA(Asn) or Gln-tRNA(Gln) through the transamidation of misacylated Asp-tRNA(Asn) or Glu-tRNA(Gln) in organisms which lack either or both of asparaginyl-tRNA or glutaminyl-tRNA synthetases. The reaction takes place in the presence of glutamine and ATP through an activated phospho-Asp-tRNA(Asn) or phospho-Glu-tRNA(Gln).</text>
</comment>
<comment type="catalytic activity">
    <reaction evidence="1">
        <text>L-glutamyl-tRNA(Gln) + L-glutamine + ATP + H2O = L-glutaminyl-tRNA(Gln) + L-glutamate + ADP + phosphate + H(+)</text>
        <dbReference type="Rhea" id="RHEA:17521"/>
        <dbReference type="Rhea" id="RHEA-COMP:9681"/>
        <dbReference type="Rhea" id="RHEA-COMP:9684"/>
        <dbReference type="ChEBI" id="CHEBI:15377"/>
        <dbReference type="ChEBI" id="CHEBI:15378"/>
        <dbReference type="ChEBI" id="CHEBI:29985"/>
        <dbReference type="ChEBI" id="CHEBI:30616"/>
        <dbReference type="ChEBI" id="CHEBI:43474"/>
        <dbReference type="ChEBI" id="CHEBI:58359"/>
        <dbReference type="ChEBI" id="CHEBI:78520"/>
        <dbReference type="ChEBI" id="CHEBI:78521"/>
        <dbReference type="ChEBI" id="CHEBI:456216"/>
    </reaction>
</comment>
<comment type="catalytic activity">
    <reaction evidence="1">
        <text>L-aspartyl-tRNA(Asn) + L-glutamine + ATP + H2O = L-asparaginyl-tRNA(Asn) + L-glutamate + ADP + phosphate + 2 H(+)</text>
        <dbReference type="Rhea" id="RHEA:14513"/>
        <dbReference type="Rhea" id="RHEA-COMP:9674"/>
        <dbReference type="Rhea" id="RHEA-COMP:9677"/>
        <dbReference type="ChEBI" id="CHEBI:15377"/>
        <dbReference type="ChEBI" id="CHEBI:15378"/>
        <dbReference type="ChEBI" id="CHEBI:29985"/>
        <dbReference type="ChEBI" id="CHEBI:30616"/>
        <dbReference type="ChEBI" id="CHEBI:43474"/>
        <dbReference type="ChEBI" id="CHEBI:58359"/>
        <dbReference type="ChEBI" id="CHEBI:78515"/>
        <dbReference type="ChEBI" id="CHEBI:78516"/>
        <dbReference type="ChEBI" id="CHEBI:456216"/>
    </reaction>
</comment>
<comment type="subunit">
    <text evidence="1">Heterotrimer of A, B and C subunits.</text>
</comment>
<comment type="similarity">
    <text evidence="1">Belongs to the GatB/GatE family. GatB subfamily.</text>
</comment>
<proteinExistence type="inferred from homology"/>
<reference key="1">
    <citation type="submission" date="2007-06" db="EMBL/GenBank/DDBJ databases">
        <title>Complete sequence of Clostridium beijerinckii NCIMB 8052.</title>
        <authorList>
            <consortium name="US DOE Joint Genome Institute"/>
            <person name="Copeland A."/>
            <person name="Lucas S."/>
            <person name="Lapidus A."/>
            <person name="Barry K."/>
            <person name="Detter J.C."/>
            <person name="Glavina del Rio T."/>
            <person name="Hammon N."/>
            <person name="Israni S."/>
            <person name="Dalin E."/>
            <person name="Tice H."/>
            <person name="Pitluck S."/>
            <person name="Sims D."/>
            <person name="Brettin T."/>
            <person name="Bruce D."/>
            <person name="Tapia R."/>
            <person name="Brainard J."/>
            <person name="Schmutz J."/>
            <person name="Larimer F."/>
            <person name="Land M."/>
            <person name="Hauser L."/>
            <person name="Kyrpides N."/>
            <person name="Mikhailova N."/>
            <person name="Bennet G."/>
            <person name="Cann I."/>
            <person name="Chen J.-S."/>
            <person name="Contreras A.L."/>
            <person name="Jones D."/>
            <person name="Kashket E."/>
            <person name="Mitchell W."/>
            <person name="Stoddard S."/>
            <person name="Schwarz W."/>
            <person name="Qureshi N."/>
            <person name="Young M."/>
            <person name="Shi Z."/>
            <person name="Ezeji T."/>
            <person name="White B."/>
            <person name="Blaschek H."/>
            <person name="Richardson P."/>
        </authorList>
    </citation>
    <scope>NUCLEOTIDE SEQUENCE [LARGE SCALE GENOMIC DNA]</scope>
    <source>
        <strain>ATCC 51743 / NCIMB 8052</strain>
    </source>
</reference>
<dbReference type="EC" id="6.3.5.-" evidence="1"/>
<dbReference type="EMBL" id="CP000721">
    <property type="protein sequence ID" value="ABR34296.1"/>
    <property type="molecule type" value="Genomic_DNA"/>
</dbReference>
<dbReference type="RefSeq" id="WP_012058355.1">
    <property type="nucleotide sequence ID" value="NC_009617.1"/>
</dbReference>
<dbReference type="SMR" id="A6LVB6"/>
<dbReference type="KEGG" id="cbe:Cbei_2129"/>
<dbReference type="eggNOG" id="COG0064">
    <property type="taxonomic scope" value="Bacteria"/>
</dbReference>
<dbReference type="HOGENOM" id="CLU_019240_0_0_9"/>
<dbReference type="Proteomes" id="UP000000565">
    <property type="component" value="Chromosome"/>
</dbReference>
<dbReference type="GO" id="GO:0050566">
    <property type="term" value="F:asparaginyl-tRNA synthase (glutamine-hydrolyzing) activity"/>
    <property type="evidence" value="ECO:0007669"/>
    <property type="project" value="RHEA"/>
</dbReference>
<dbReference type="GO" id="GO:0005524">
    <property type="term" value="F:ATP binding"/>
    <property type="evidence" value="ECO:0007669"/>
    <property type="project" value="UniProtKB-KW"/>
</dbReference>
<dbReference type="GO" id="GO:0050567">
    <property type="term" value="F:glutaminyl-tRNA synthase (glutamine-hydrolyzing) activity"/>
    <property type="evidence" value="ECO:0007669"/>
    <property type="project" value="UniProtKB-UniRule"/>
</dbReference>
<dbReference type="GO" id="GO:0006412">
    <property type="term" value="P:translation"/>
    <property type="evidence" value="ECO:0007669"/>
    <property type="project" value="UniProtKB-UniRule"/>
</dbReference>
<dbReference type="FunFam" id="1.10.10.410:FF:000001">
    <property type="entry name" value="Aspartyl/glutamyl-tRNA(Asn/Gln) amidotransferase subunit B"/>
    <property type="match status" value="1"/>
</dbReference>
<dbReference type="Gene3D" id="1.10.10.410">
    <property type="match status" value="1"/>
</dbReference>
<dbReference type="Gene3D" id="1.10.150.380">
    <property type="entry name" value="GatB domain, N-terminal subdomain"/>
    <property type="match status" value="1"/>
</dbReference>
<dbReference type="HAMAP" id="MF_00121">
    <property type="entry name" value="GatB"/>
    <property type="match status" value="1"/>
</dbReference>
<dbReference type="InterPro" id="IPR017959">
    <property type="entry name" value="Asn/Gln-tRNA_amidoTrfase_suB/E"/>
</dbReference>
<dbReference type="InterPro" id="IPR006075">
    <property type="entry name" value="Asn/Gln-tRNA_Trfase_suB/E_cat"/>
</dbReference>
<dbReference type="InterPro" id="IPR018027">
    <property type="entry name" value="Asn/Gln_amidotransferase"/>
</dbReference>
<dbReference type="InterPro" id="IPR003789">
    <property type="entry name" value="Asn/Gln_tRNA_amidoTrase-B-like"/>
</dbReference>
<dbReference type="InterPro" id="IPR004413">
    <property type="entry name" value="GatB"/>
</dbReference>
<dbReference type="InterPro" id="IPR042114">
    <property type="entry name" value="GatB_C_1"/>
</dbReference>
<dbReference type="InterPro" id="IPR023168">
    <property type="entry name" value="GatB_Yqey_C_2"/>
</dbReference>
<dbReference type="InterPro" id="IPR017958">
    <property type="entry name" value="Gln-tRNA_amidoTrfase_suB_CS"/>
</dbReference>
<dbReference type="InterPro" id="IPR014746">
    <property type="entry name" value="Gln_synth/guanido_kin_cat_dom"/>
</dbReference>
<dbReference type="NCBIfam" id="TIGR00133">
    <property type="entry name" value="gatB"/>
    <property type="match status" value="1"/>
</dbReference>
<dbReference type="NCBIfam" id="NF004012">
    <property type="entry name" value="PRK05477.1-2"/>
    <property type="match status" value="1"/>
</dbReference>
<dbReference type="NCBIfam" id="NF004014">
    <property type="entry name" value="PRK05477.1-4"/>
    <property type="match status" value="1"/>
</dbReference>
<dbReference type="PANTHER" id="PTHR11659">
    <property type="entry name" value="GLUTAMYL-TRNA GLN AMIDOTRANSFERASE SUBUNIT B MITOCHONDRIAL AND PROKARYOTIC PET112-RELATED"/>
    <property type="match status" value="1"/>
</dbReference>
<dbReference type="Pfam" id="PF02934">
    <property type="entry name" value="GatB_N"/>
    <property type="match status" value="1"/>
</dbReference>
<dbReference type="Pfam" id="PF02637">
    <property type="entry name" value="GatB_Yqey"/>
    <property type="match status" value="1"/>
</dbReference>
<dbReference type="SMART" id="SM00845">
    <property type="entry name" value="GatB_Yqey"/>
    <property type="match status" value="1"/>
</dbReference>
<dbReference type="SUPFAM" id="SSF89095">
    <property type="entry name" value="GatB/YqeY motif"/>
    <property type="match status" value="1"/>
</dbReference>
<dbReference type="SUPFAM" id="SSF55931">
    <property type="entry name" value="Glutamine synthetase/guanido kinase"/>
    <property type="match status" value="1"/>
</dbReference>
<dbReference type="PROSITE" id="PS01234">
    <property type="entry name" value="GATB"/>
    <property type="match status" value="1"/>
</dbReference>
<gene>
    <name evidence="1" type="primary">gatB</name>
    <name type="ordered locus">Cbei_2129</name>
</gene>
<sequence length="479" mass="54038">MNFETVIGLEIHAELKSKTKIFCSCSTKFGAEPNANTCPICTGVPGTLPVLNEEVVNLAIKAGTALGCTINKYNKMDRKNYFYPDLPKNYQTSQFDMPICSGGLVEFEHEGKEVKVRLNRIHIEEDAGKLVHVEGEPISLVDYNRVGVPLAEIVTEPDLRSVSEAVAFMKKLKSILEYGEISDCRMEQGSLRCDANISLRPVGQKEFGLRVELKNINSFRELQKALEKEERRQRELYTYGEGHKIVQETRRWDAAKGKTIPMRSKEEADDYRYVVEPDLPPIIIYDEQIETITKSLPEMPDEKKERFLTAYELSEKEVDILIGDKGLATFFEKVVELGATPKIASNWILGDILRILNDRKIESEDMHIEAENFAKLLKVVEEGKISNNVGREVLDEIFDENKDPMKVIEEKGLMQISSSDELEKIVAEVIANNPQSVEDFKAGKTQSAGFLMGQVMKLSKGKANPKVAKELVDKKLSEI</sequence>
<accession>A6LVB6</accession>